<evidence type="ECO:0000255" key="1">
    <source>
        <dbReference type="HAMAP-Rule" id="MF_00197"/>
    </source>
</evidence>
<dbReference type="EC" id="5.1.1.7" evidence="1"/>
<dbReference type="EMBL" id="CU928161">
    <property type="protein sequence ID" value="CAR05427.1"/>
    <property type="molecule type" value="Genomic_DNA"/>
</dbReference>
<dbReference type="RefSeq" id="WP_001160654.1">
    <property type="nucleotide sequence ID" value="NC_011742.1"/>
</dbReference>
<dbReference type="SMR" id="B7MH73"/>
<dbReference type="GeneID" id="93778134"/>
<dbReference type="KEGG" id="ecz:ECS88_4235"/>
<dbReference type="HOGENOM" id="CLU_053306_1_1_6"/>
<dbReference type="UniPathway" id="UPA00034">
    <property type="reaction ID" value="UER00025"/>
</dbReference>
<dbReference type="Proteomes" id="UP000000747">
    <property type="component" value="Chromosome"/>
</dbReference>
<dbReference type="GO" id="GO:0005829">
    <property type="term" value="C:cytosol"/>
    <property type="evidence" value="ECO:0007669"/>
    <property type="project" value="TreeGrafter"/>
</dbReference>
<dbReference type="GO" id="GO:0008837">
    <property type="term" value="F:diaminopimelate epimerase activity"/>
    <property type="evidence" value="ECO:0007669"/>
    <property type="project" value="UniProtKB-UniRule"/>
</dbReference>
<dbReference type="GO" id="GO:0009089">
    <property type="term" value="P:lysine biosynthetic process via diaminopimelate"/>
    <property type="evidence" value="ECO:0007669"/>
    <property type="project" value="UniProtKB-UniRule"/>
</dbReference>
<dbReference type="FunFam" id="3.10.310.10:FF:000001">
    <property type="entry name" value="Diaminopimelate epimerase"/>
    <property type="match status" value="1"/>
</dbReference>
<dbReference type="FunFam" id="3.10.310.10:FF:000002">
    <property type="entry name" value="Diaminopimelate epimerase"/>
    <property type="match status" value="1"/>
</dbReference>
<dbReference type="Gene3D" id="3.10.310.10">
    <property type="entry name" value="Diaminopimelate Epimerase, Chain A, domain 1"/>
    <property type="match status" value="2"/>
</dbReference>
<dbReference type="HAMAP" id="MF_00197">
    <property type="entry name" value="DAP_epimerase"/>
    <property type="match status" value="1"/>
</dbReference>
<dbReference type="InterPro" id="IPR018510">
    <property type="entry name" value="DAP_epimerase_AS"/>
</dbReference>
<dbReference type="InterPro" id="IPR001653">
    <property type="entry name" value="DAP_epimerase_DapF"/>
</dbReference>
<dbReference type="NCBIfam" id="TIGR00652">
    <property type="entry name" value="DapF"/>
    <property type="match status" value="1"/>
</dbReference>
<dbReference type="PANTHER" id="PTHR31689:SF0">
    <property type="entry name" value="DIAMINOPIMELATE EPIMERASE"/>
    <property type="match status" value="1"/>
</dbReference>
<dbReference type="PANTHER" id="PTHR31689">
    <property type="entry name" value="DIAMINOPIMELATE EPIMERASE, CHLOROPLASTIC"/>
    <property type="match status" value="1"/>
</dbReference>
<dbReference type="Pfam" id="PF01678">
    <property type="entry name" value="DAP_epimerase"/>
    <property type="match status" value="2"/>
</dbReference>
<dbReference type="SUPFAM" id="SSF54506">
    <property type="entry name" value="Diaminopimelate epimerase-like"/>
    <property type="match status" value="1"/>
</dbReference>
<dbReference type="PROSITE" id="PS01326">
    <property type="entry name" value="DAP_EPIMERASE"/>
    <property type="match status" value="1"/>
</dbReference>
<protein>
    <recommendedName>
        <fullName evidence="1">Diaminopimelate epimerase</fullName>
        <shortName evidence="1">DAP epimerase</shortName>
        <ecNumber evidence="1">5.1.1.7</ecNumber>
    </recommendedName>
    <alternativeName>
        <fullName evidence="1">PLP-independent amino acid racemase</fullName>
    </alternativeName>
</protein>
<feature type="chain" id="PRO_1000118667" description="Diaminopimelate epimerase">
    <location>
        <begin position="1"/>
        <end position="274"/>
    </location>
</feature>
<feature type="active site" description="Proton donor" evidence="1">
    <location>
        <position position="73"/>
    </location>
</feature>
<feature type="active site" description="Proton acceptor" evidence="1">
    <location>
        <position position="217"/>
    </location>
</feature>
<feature type="binding site" evidence="1">
    <location>
        <position position="11"/>
    </location>
    <ligand>
        <name>substrate</name>
    </ligand>
</feature>
<feature type="binding site" evidence="1">
    <location>
        <position position="44"/>
    </location>
    <ligand>
        <name>substrate</name>
    </ligand>
</feature>
<feature type="binding site" evidence="1">
    <location>
        <position position="64"/>
    </location>
    <ligand>
        <name>substrate</name>
    </ligand>
</feature>
<feature type="binding site" evidence="1">
    <location>
        <begin position="74"/>
        <end position="75"/>
    </location>
    <ligand>
        <name>substrate</name>
    </ligand>
</feature>
<feature type="binding site" evidence="1">
    <location>
        <position position="157"/>
    </location>
    <ligand>
        <name>substrate</name>
    </ligand>
</feature>
<feature type="binding site" evidence="1">
    <location>
        <position position="190"/>
    </location>
    <ligand>
        <name>substrate</name>
    </ligand>
</feature>
<feature type="binding site" evidence="1">
    <location>
        <begin position="208"/>
        <end position="209"/>
    </location>
    <ligand>
        <name>substrate</name>
    </ligand>
</feature>
<feature type="binding site" evidence="1">
    <location>
        <begin position="218"/>
        <end position="219"/>
    </location>
    <ligand>
        <name>substrate</name>
    </ligand>
</feature>
<feature type="site" description="Could be important to modulate the pK values of the two catalytic cysteine residues" evidence="1">
    <location>
        <position position="159"/>
    </location>
</feature>
<feature type="site" description="Could be important to modulate the pK values of the two catalytic cysteine residues" evidence="1">
    <location>
        <position position="208"/>
    </location>
</feature>
<feature type="site" description="Important for dimerization" evidence="1">
    <location>
        <position position="268"/>
    </location>
</feature>
<proteinExistence type="inferred from homology"/>
<name>DAPF_ECO45</name>
<organism>
    <name type="scientific">Escherichia coli O45:K1 (strain S88 / ExPEC)</name>
    <dbReference type="NCBI Taxonomy" id="585035"/>
    <lineage>
        <taxon>Bacteria</taxon>
        <taxon>Pseudomonadati</taxon>
        <taxon>Pseudomonadota</taxon>
        <taxon>Gammaproteobacteria</taxon>
        <taxon>Enterobacterales</taxon>
        <taxon>Enterobacteriaceae</taxon>
        <taxon>Escherichia</taxon>
    </lineage>
</organism>
<reference key="1">
    <citation type="journal article" date="2009" name="PLoS Genet.">
        <title>Organised genome dynamics in the Escherichia coli species results in highly diverse adaptive paths.</title>
        <authorList>
            <person name="Touchon M."/>
            <person name="Hoede C."/>
            <person name="Tenaillon O."/>
            <person name="Barbe V."/>
            <person name="Baeriswyl S."/>
            <person name="Bidet P."/>
            <person name="Bingen E."/>
            <person name="Bonacorsi S."/>
            <person name="Bouchier C."/>
            <person name="Bouvet O."/>
            <person name="Calteau A."/>
            <person name="Chiapello H."/>
            <person name="Clermont O."/>
            <person name="Cruveiller S."/>
            <person name="Danchin A."/>
            <person name="Diard M."/>
            <person name="Dossat C."/>
            <person name="Karoui M.E."/>
            <person name="Frapy E."/>
            <person name="Garry L."/>
            <person name="Ghigo J.M."/>
            <person name="Gilles A.M."/>
            <person name="Johnson J."/>
            <person name="Le Bouguenec C."/>
            <person name="Lescat M."/>
            <person name="Mangenot S."/>
            <person name="Martinez-Jehanne V."/>
            <person name="Matic I."/>
            <person name="Nassif X."/>
            <person name="Oztas S."/>
            <person name="Petit M.A."/>
            <person name="Pichon C."/>
            <person name="Rouy Z."/>
            <person name="Ruf C.S."/>
            <person name="Schneider D."/>
            <person name="Tourret J."/>
            <person name="Vacherie B."/>
            <person name="Vallenet D."/>
            <person name="Medigue C."/>
            <person name="Rocha E.P.C."/>
            <person name="Denamur E."/>
        </authorList>
    </citation>
    <scope>NUCLEOTIDE SEQUENCE [LARGE SCALE GENOMIC DNA]</scope>
    <source>
        <strain>S88 / ExPEC</strain>
    </source>
</reference>
<accession>B7MH73</accession>
<keyword id="KW-0028">Amino-acid biosynthesis</keyword>
<keyword id="KW-0963">Cytoplasm</keyword>
<keyword id="KW-0413">Isomerase</keyword>
<keyword id="KW-0457">Lysine biosynthesis</keyword>
<keyword id="KW-1185">Reference proteome</keyword>
<gene>
    <name evidence="1" type="primary">dapF</name>
    <name type="ordered locus">ECS88_4235</name>
</gene>
<comment type="function">
    <text evidence="1">Catalyzes the stereoinversion of LL-2,6-diaminopimelate (L,L-DAP) to meso-diaminopimelate (meso-DAP), a precursor of L-lysine and an essential component of the bacterial peptidoglycan.</text>
</comment>
<comment type="catalytic activity">
    <reaction evidence="1">
        <text>(2S,6S)-2,6-diaminopimelate = meso-2,6-diaminopimelate</text>
        <dbReference type="Rhea" id="RHEA:15393"/>
        <dbReference type="ChEBI" id="CHEBI:57609"/>
        <dbReference type="ChEBI" id="CHEBI:57791"/>
        <dbReference type="EC" id="5.1.1.7"/>
    </reaction>
</comment>
<comment type="pathway">
    <text evidence="1">Amino-acid biosynthesis; L-lysine biosynthesis via DAP pathway; DL-2,6-diaminopimelate from LL-2,6-diaminopimelate: step 1/1.</text>
</comment>
<comment type="subunit">
    <text evidence="1">Homodimer.</text>
</comment>
<comment type="subcellular location">
    <subcellularLocation>
        <location evidence="1">Cytoplasm</location>
    </subcellularLocation>
</comment>
<comment type="similarity">
    <text evidence="1">Belongs to the diaminopimelate epimerase family.</text>
</comment>
<sequence>MQFSKMHGLGNDFMVVDAVTQNVFFSPELIRRLADRHLGVGFDQLLVVEPPYDPELDFHYRIFNADGSEVAQCGNGARCFARFVRLKGLTNKRDIRVSTANGRMVLTVTDDDLVRVNMGEPNFEPSAVPFRANKAEKTYIMRAAEQTILCGVVSMGNPHCVIQVDDVDTAAVETLGPVLESHERFPERANIGFMQVVKREHIRLRVYERGAGETQACGSGACAAVAVGIQQGLLAEEVRVELPGGRLDIAWKGPGHPLYMTGPAVHVYDGFIHL</sequence>